<name>TM87A_HUMAN</name>
<accession>Q8NBN3</accession>
<accession>Q6NT77</accession>
<accession>Q8NCA4</accession>
<accession>Q9BS46</accession>
<accession>Q9P103</accession>
<accession>Q9Y3Y7</accession>
<feature type="signal peptide" evidence="1">
    <location>
        <begin position="1"/>
        <end position="21"/>
    </location>
</feature>
<feature type="chain" id="PRO_0000270751" description="Transmembrane protein 87A">
    <location>
        <begin position="22"/>
        <end position="555"/>
    </location>
</feature>
<feature type="topological domain" description="Lumenal" evidence="10">
    <location>
        <begin position="22"/>
        <end position="225"/>
    </location>
</feature>
<feature type="transmembrane region" description="Helical; Name=1" evidence="1">
    <location>
        <begin position="226"/>
        <end position="246"/>
    </location>
</feature>
<feature type="topological domain" description="Cytoplasmic" evidence="10">
    <location>
        <begin position="247"/>
        <end position="257"/>
    </location>
</feature>
<feature type="transmembrane region" description="Helical; Name=2" evidence="1">
    <location>
        <begin position="258"/>
        <end position="278"/>
    </location>
</feature>
<feature type="topological domain" description="Lumenal" evidence="10">
    <location>
        <begin position="279"/>
        <end position="305"/>
    </location>
</feature>
<feature type="transmembrane region" description="Helical; Name=3" evidence="1">
    <location>
        <begin position="306"/>
        <end position="322"/>
    </location>
</feature>
<feature type="topological domain" description="Cytoplasmic" evidence="10">
    <location>
        <begin position="323"/>
        <end position="325"/>
    </location>
</feature>
<feature type="transmembrane region" description="Helical; Name=4" evidence="1">
    <location>
        <begin position="326"/>
        <end position="346"/>
    </location>
</feature>
<feature type="topological domain" description="Lumenal" evidence="10">
    <location>
        <begin position="347"/>
        <end position="361"/>
    </location>
</feature>
<feature type="transmembrane region" description="Helical; Name=5" evidence="1">
    <location>
        <begin position="362"/>
        <end position="382"/>
    </location>
</feature>
<feature type="topological domain" description="Cytoplasmic" evidence="10">
    <location>
        <begin position="383"/>
        <end position="403"/>
    </location>
</feature>
<feature type="transmembrane region" description="Helical; Name=6" evidence="1">
    <location>
        <begin position="404"/>
        <end position="424"/>
    </location>
</feature>
<feature type="topological domain" description="Lumenal" evidence="10">
    <location>
        <begin position="425"/>
        <end position="437"/>
    </location>
</feature>
<feature type="transmembrane region" description="Helical; Name=7" evidence="1">
    <location>
        <begin position="438"/>
        <end position="458"/>
    </location>
</feature>
<feature type="topological domain" description="Cytoplasmic" evidence="10">
    <location>
        <begin position="459"/>
        <end position="555"/>
    </location>
</feature>
<feature type="region of interest" description="Disordered" evidence="2">
    <location>
        <begin position="473"/>
        <end position="516"/>
    </location>
</feature>
<feature type="compositionally biased region" description="Basic and acidic residues" evidence="2">
    <location>
        <begin position="484"/>
        <end position="496"/>
    </location>
</feature>
<feature type="compositionally biased region" description="Polar residues" evidence="2">
    <location>
        <begin position="502"/>
        <end position="511"/>
    </location>
</feature>
<feature type="modified residue" description="Phosphoserine" evidence="14 15 16 17 18 19">
    <location>
        <position position="540"/>
    </location>
</feature>
<feature type="glycosylation site" description="N-linked (GlcNAc...) asparagine" evidence="1">
    <location>
        <position position="79"/>
    </location>
</feature>
<feature type="glycosylation site" description="N-linked (GlcNAc...) asparagine" evidence="1">
    <location>
        <position position="127"/>
    </location>
</feature>
<feature type="glycosylation site" description="N-linked (GlcNAc...) asparagine" evidence="3">
    <location>
        <position position="157"/>
    </location>
</feature>
<feature type="glycosylation site" description="N-linked (GlcNAc...) asparagine" evidence="3">
    <location>
        <position position="160"/>
    </location>
</feature>
<feature type="disulfide bond" evidence="6 13">
    <location>
        <begin position="74"/>
        <end position="128"/>
    </location>
</feature>
<feature type="disulfide bond" evidence="6 13">
    <location>
        <begin position="89"/>
        <end position="431"/>
    </location>
</feature>
<feature type="splice variant" id="VSP_022207" description="In isoform 3." evidence="8">
    <original>MAAAAWLQVLPVILLLLGAHPSPLSFFSAGPATVAAADRSKWHIPIPSGKNYFSFGKILFRNTTIFLKF</original>
    <variation>MAHSDTVV</variation>
    <location>
        <begin position="1"/>
        <end position="69"/>
    </location>
</feature>
<feature type="splice variant" id="VSP_022208" description="In isoform 2." evidence="8">
    <original>AMHEPLQTWQDAP</original>
    <variation>IQMPFLKKHFLDC</variation>
    <location>
        <begin position="169"/>
        <end position="181"/>
    </location>
</feature>
<feature type="splice variant" id="VSP_022209" description="In isoform 2." evidence="8">
    <location>
        <begin position="182"/>
        <end position="555"/>
    </location>
</feature>
<feature type="mutagenesis site" description="Reduced mechanosensitive channel activity in Tmem87a-expressing cells." evidence="5">
    <original>L</original>
    <variation>F</variation>
    <location>
        <position position="271"/>
    </location>
</feature>
<feature type="mutagenesis site" description="Reduced mechanosensitive channel activity in Tmem87a-expressing cells." evidence="5">
    <original>G</original>
    <variation>N</variation>
    <location>
        <position position="292"/>
    </location>
</feature>
<feature type="sequence conflict" description="In Ref. 1; AAF66444." evidence="10" ref="1">
    <original>KY</original>
    <variation>NI</variation>
    <location>
        <begin position="117"/>
        <end position="118"/>
    </location>
</feature>
<feature type="sequence conflict" description="In Ref. 1; AAF66444." evidence="10" ref="1">
    <original>I</original>
    <variation>S</variation>
    <location>
        <position position="313"/>
    </location>
</feature>
<feature type="sequence conflict" description="In Ref. 4; CAB43218." evidence="10" ref="4">
    <original>MK</original>
    <variation>KG</variation>
    <location>
        <begin position="424"/>
        <end position="425"/>
    </location>
</feature>
<feature type="sequence conflict" description="In Ref. 4; CAB43218." evidence="10" ref="4">
    <original>E</original>
    <variation>V</variation>
    <location>
        <position position="485"/>
    </location>
</feature>
<feature type="sequence conflict" description="In Ref. 2; BAC11598." evidence="10" ref="2">
    <original>L</original>
    <variation>S</variation>
    <location>
        <position position="518"/>
    </location>
</feature>
<feature type="strand" evidence="20">
    <location>
        <begin position="40"/>
        <end position="44"/>
    </location>
</feature>
<feature type="strand" evidence="20">
    <location>
        <begin position="46"/>
        <end position="48"/>
    </location>
</feature>
<feature type="strand" evidence="20">
    <location>
        <begin position="52"/>
        <end position="59"/>
    </location>
</feature>
<feature type="strand" evidence="20">
    <location>
        <begin position="64"/>
        <end position="72"/>
    </location>
</feature>
<feature type="strand" evidence="20">
    <location>
        <begin position="76"/>
        <end position="85"/>
    </location>
</feature>
<feature type="helix" evidence="20">
    <location>
        <begin position="91"/>
        <end position="94"/>
    </location>
</feature>
<feature type="helix" evidence="20">
    <location>
        <begin position="98"/>
        <end position="100"/>
    </location>
</feature>
<feature type="helix" evidence="20">
    <location>
        <begin position="101"/>
        <end position="107"/>
    </location>
</feature>
<feature type="turn" evidence="20">
    <location>
        <begin position="108"/>
        <end position="111"/>
    </location>
</feature>
<feature type="strand" evidence="20">
    <location>
        <begin position="118"/>
        <end position="127"/>
    </location>
</feature>
<feature type="turn" evidence="20">
    <location>
        <begin position="134"/>
        <end position="136"/>
    </location>
</feature>
<feature type="strand" evidence="20">
    <location>
        <begin position="173"/>
        <end position="175"/>
    </location>
</feature>
<feature type="strand" evidence="20">
    <location>
        <begin position="177"/>
        <end position="191"/>
    </location>
</feature>
<feature type="strand" evidence="20">
    <location>
        <begin position="206"/>
        <end position="213"/>
    </location>
</feature>
<feature type="strand" evidence="20">
    <location>
        <begin position="215"/>
        <end position="218"/>
    </location>
</feature>
<feature type="turn" evidence="20">
    <location>
        <begin position="221"/>
        <end position="223"/>
    </location>
</feature>
<feature type="helix" evidence="20">
    <location>
        <begin position="224"/>
        <end position="250"/>
    </location>
</feature>
<feature type="helix" evidence="20">
    <location>
        <begin position="258"/>
        <end position="286"/>
    </location>
</feature>
<feature type="turn" evidence="20">
    <location>
        <begin position="291"/>
        <end position="293"/>
    </location>
</feature>
<feature type="helix" evidence="20">
    <location>
        <begin position="294"/>
        <end position="316"/>
    </location>
</feature>
<feature type="turn" evidence="20">
    <location>
        <begin position="320"/>
        <end position="322"/>
    </location>
</feature>
<feature type="helix" evidence="21">
    <location>
        <begin position="327"/>
        <end position="330"/>
    </location>
</feature>
<feature type="turn" evidence="20">
    <location>
        <begin position="331"/>
        <end position="334"/>
    </location>
</feature>
<feature type="helix" evidence="20">
    <location>
        <begin position="335"/>
        <end position="338"/>
    </location>
</feature>
<feature type="helix" evidence="20">
    <location>
        <begin position="339"/>
        <end position="352"/>
    </location>
</feature>
<feature type="helix" evidence="20">
    <location>
        <begin position="360"/>
        <end position="391"/>
    </location>
</feature>
<feature type="helix" evidence="20">
    <location>
        <begin position="396"/>
        <end position="425"/>
    </location>
</feature>
<feature type="turn" evidence="20">
    <location>
        <begin position="426"/>
        <end position="428"/>
    </location>
</feature>
<feature type="strand" evidence="20">
    <location>
        <begin position="429"/>
        <end position="431"/>
    </location>
</feature>
<feature type="helix" evidence="20">
    <location>
        <begin position="440"/>
        <end position="442"/>
    </location>
</feature>
<feature type="helix" evidence="20">
    <location>
        <begin position="444"/>
        <end position="459"/>
    </location>
</feature>
<feature type="turn" evidence="20">
    <location>
        <begin position="466"/>
        <end position="469"/>
    </location>
</feature>
<dbReference type="EMBL" id="AF132733">
    <property type="protein sequence ID" value="AAF66444.1"/>
    <property type="molecule type" value="mRNA"/>
</dbReference>
<dbReference type="EMBL" id="AK074870">
    <property type="protein sequence ID" value="BAC11256.1"/>
    <property type="molecule type" value="mRNA"/>
</dbReference>
<dbReference type="EMBL" id="AK075403">
    <property type="protein sequence ID" value="BAC11598.1"/>
    <property type="status" value="ALT_INIT"/>
    <property type="molecule type" value="mRNA"/>
</dbReference>
<dbReference type="EMBL" id="BC005335">
    <property type="protein sequence ID" value="AAH05335.1"/>
    <property type="molecule type" value="mRNA"/>
</dbReference>
<dbReference type="EMBL" id="BC069240">
    <property type="protein sequence ID" value="AAH69240.1"/>
    <property type="molecule type" value="mRNA"/>
</dbReference>
<dbReference type="EMBL" id="AL049944">
    <property type="protein sequence ID" value="CAB43218.1"/>
    <property type="molecule type" value="mRNA"/>
</dbReference>
<dbReference type="CCDS" id="CCDS32205.1">
    <molecule id="Q8NBN3-1"/>
</dbReference>
<dbReference type="CCDS" id="CCDS45243.1">
    <molecule id="Q8NBN3-2"/>
</dbReference>
<dbReference type="PIR" id="T08676">
    <property type="entry name" value="T08676"/>
</dbReference>
<dbReference type="RefSeq" id="NP_001103973.1">
    <molecule id="Q8NBN3-2"/>
    <property type="nucleotide sequence ID" value="NM_001110503.3"/>
</dbReference>
<dbReference type="RefSeq" id="NP_001273416.1">
    <molecule id="Q8NBN3-3"/>
    <property type="nucleotide sequence ID" value="NM_001286487.1"/>
</dbReference>
<dbReference type="RefSeq" id="NP_056312.2">
    <molecule id="Q8NBN3-1"/>
    <property type="nucleotide sequence ID" value="NM_015497.4"/>
</dbReference>
<dbReference type="PDB" id="8CTJ">
    <property type="method" value="EM"/>
    <property type="resolution" value="4.74 A"/>
    <property type="chains" value="A=1-555"/>
</dbReference>
<dbReference type="PDB" id="8HSI">
    <property type="method" value="EM"/>
    <property type="resolution" value="3.10 A"/>
    <property type="chains" value="A=1-555"/>
</dbReference>
<dbReference type="PDB" id="8HTT">
    <property type="method" value="EM"/>
    <property type="resolution" value="3.60 A"/>
    <property type="chains" value="B=1-555"/>
</dbReference>
<dbReference type="PDB" id="8KB4">
    <property type="method" value="EM"/>
    <property type="resolution" value="3.10 A"/>
    <property type="chains" value="A=1-555"/>
</dbReference>
<dbReference type="PDBsum" id="8CTJ"/>
<dbReference type="PDBsum" id="8HSI"/>
<dbReference type="PDBsum" id="8HTT"/>
<dbReference type="PDBsum" id="8KB4"/>
<dbReference type="EMDB" id="EMD-26992"/>
<dbReference type="EMDB" id="EMD-34998"/>
<dbReference type="SMR" id="Q8NBN3"/>
<dbReference type="BioGRID" id="117453">
    <property type="interactions" value="250"/>
</dbReference>
<dbReference type="FunCoup" id="Q8NBN3">
    <property type="interactions" value="2550"/>
</dbReference>
<dbReference type="IntAct" id="Q8NBN3">
    <property type="interactions" value="136"/>
</dbReference>
<dbReference type="MINT" id="Q8NBN3"/>
<dbReference type="STRING" id="9606.ENSP00000374484"/>
<dbReference type="TCDB" id="9.A.14.22.4">
    <property type="family name" value="the g-protein-coupled receptor (gpcr) family"/>
</dbReference>
<dbReference type="GlyConnect" id="1854">
    <property type="glycosylation" value="19 N-Linked glycans (2 sites)"/>
</dbReference>
<dbReference type="GlyCosmos" id="Q8NBN3">
    <property type="glycosylation" value="5 sites, 21 glycans"/>
</dbReference>
<dbReference type="GlyGen" id="Q8NBN3">
    <property type="glycosylation" value="6 sites, 40 N-linked glycans (4 sites), 1 O-linked glycan (1 site)"/>
</dbReference>
<dbReference type="iPTMnet" id="Q8NBN3"/>
<dbReference type="MetOSite" id="Q8NBN3"/>
<dbReference type="PhosphoSitePlus" id="Q8NBN3"/>
<dbReference type="SwissPalm" id="Q8NBN3"/>
<dbReference type="BioMuta" id="TMEM87A"/>
<dbReference type="DMDM" id="126302609"/>
<dbReference type="jPOST" id="Q8NBN3"/>
<dbReference type="MassIVE" id="Q8NBN3"/>
<dbReference type="PaxDb" id="9606-ENSP00000374484"/>
<dbReference type="PeptideAtlas" id="Q8NBN3"/>
<dbReference type="ProteomicsDB" id="72799">
    <molecule id="Q8NBN3-1"/>
</dbReference>
<dbReference type="ProteomicsDB" id="72800">
    <molecule id="Q8NBN3-2"/>
</dbReference>
<dbReference type="ProteomicsDB" id="72801">
    <molecule id="Q8NBN3-3"/>
</dbReference>
<dbReference type="Pumba" id="Q8NBN3"/>
<dbReference type="Antibodypedia" id="10648">
    <property type="antibodies" value="55 antibodies from 14 providers"/>
</dbReference>
<dbReference type="DNASU" id="25963"/>
<dbReference type="Ensembl" id="ENST00000307216.10">
    <molecule id="Q8NBN3-2"/>
    <property type="protein sequence ID" value="ENSP00000305894.6"/>
    <property type="gene ID" value="ENSG00000103978.17"/>
</dbReference>
<dbReference type="Ensembl" id="ENST00000389834.9">
    <molecule id="Q8NBN3-1"/>
    <property type="protein sequence ID" value="ENSP00000374484.4"/>
    <property type="gene ID" value="ENSG00000103978.17"/>
</dbReference>
<dbReference type="GeneID" id="25963"/>
<dbReference type="KEGG" id="hsa:25963"/>
<dbReference type="MANE-Select" id="ENST00000389834.9">
    <property type="protein sequence ID" value="ENSP00000374484.4"/>
    <property type="RefSeq nucleotide sequence ID" value="NM_015497.5"/>
    <property type="RefSeq protein sequence ID" value="NP_056312.2"/>
</dbReference>
<dbReference type="UCSC" id="uc001zpg.4">
    <molecule id="Q8NBN3-1"/>
    <property type="organism name" value="human"/>
</dbReference>
<dbReference type="AGR" id="HGNC:24522"/>
<dbReference type="CTD" id="25963"/>
<dbReference type="DisGeNET" id="25963"/>
<dbReference type="GeneCards" id="TMEM87A"/>
<dbReference type="HGNC" id="HGNC:24522">
    <property type="gene designation" value="TMEM87A"/>
</dbReference>
<dbReference type="HPA" id="ENSG00000103978">
    <property type="expression patterns" value="Low tissue specificity"/>
</dbReference>
<dbReference type="neXtProt" id="NX_Q8NBN3"/>
<dbReference type="OpenTargets" id="ENSG00000103978"/>
<dbReference type="PharmGKB" id="PA142670739"/>
<dbReference type="VEuPathDB" id="HostDB:ENSG00000103978"/>
<dbReference type="eggNOG" id="KOG2568">
    <property type="taxonomic scope" value="Eukaryota"/>
</dbReference>
<dbReference type="GeneTree" id="ENSGT00940000159481"/>
<dbReference type="HOGENOM" id="CLU_027525_0_0_1"/>
<dbReference type="InParanoid" id="Q8NBN3"/>
<dbReference type="OMA" id="IFMRFLN"/>
<dbReference type="OrthoDB" id="19932at2759"/>
<dbReference type="PAN-GO" id="Q8NBN3">
    <property type="GO annotations" value="3 GO annotations based on evolutionary models"/>
</dbReference>
<dbReference type="PhylomeDB" id="Q8NBN3"/>
<dbReference type="TreeFam" id="TF314452"/>
<dbReference type="PathwayCommons" id="Q8NBN3"/>
<dbReference type="Reactome" id="R-HSA-8980692">
    <property type="pathway name" value="RHOA GTPase cycle"/>
</dbReference>
<dbReference type="SignaLink" id="Q8NBN3"/>
<dbReference type="BioGRID-ORCS" id="25963">
    <property type="hits" value="9 hits in 1165 CRISPR screens"/>
</dbReference>
<dbReference type="ChiTaRS" id="TMEM87A">
    <property type="organism name" value="human"/>
</dbReference>
<dbReference type="GenomeRNAi" id="25963"/>
<dbReference type="Pharos" id="Q8NBN3">
    <property type="development level" value="Tdark"/>
</dbReference>
<dbReference type="PRO" id="PR:Q8NBN3"/>
<dbReference type="Proteomes" id="UP000005640">
    <property type="component" value="Chromosome 15"/>
</dbReference>
<dbReference type="RNAct" id="Q8NBN3">
    <property type="molecule type" value="protein"/>
</dbReference>
<dbReference type="Bgee" id="ENSG00000103978">
    <property type="expression patterns" value="Expressed in secondary oocyte and 213 other cell types or tissues"/>
</dbReference>
<dbReference type="ExpressionAtlas" id="Q8NBN3">
    <property type="expression patterns" value="baseline and differential"/>
</dbReference>
<dbReference type="GO" id="GO:0005829">
    <property type="term" value="C:cytosol"/>
    <property type="evidence" value="ECO:0007669"/>
    <property type="project" value="GOC"/>
</dbReference>
<dbReference type="GO" id="GO:0005794">
    <property type="term" value="C:Golgi apparatus"/>
    <property type="evidence" value="ECO:0000314"/>
    <property type="project" value="UniProtKB"/>
</dbReference>
<dbReference type="GO" id="GO:0032580">
    <property type="term" value="C:Golgi cisterna membrane"/>
    <property type="evidence" value="ECO:0000314"/>
    <property type="project" value="UniProtKB"/>
</dbReference>
<dbReference type="GO" id="GO:0000139">
    <property type="term" value="C:Golgi membrane"/>
    <property type="evidence" value="ECO:0007669"/>
    <property type="project" value="UniProtKB-SubCell"/>
</dbReference>
<dbReference type="GO" id="GO:0005886">
    <property type="term" value="C:plasma membrane"/>
    <property type="evidence" value="ECO:0000314"/>
    <property type="project" value="UniProtKB"/>
</dbReference>
<dbReference type="GO" id="GO:0001726">
    <property type="term" value="C:ruffle"/>
    <property type="evidence" value="ECO:0000314"/>
    <property type="project" value="UniProtKB"/>
</dbReference>
<dbReference type="GO" id="GO:0071260">
    <property type="term" value="P:cellular response to mechanical stimulus"/>
    <property type="evidence" value="ECO:0000315"/>
    <property type="project" value="UniProtKB"/>
</dbReference>
<dbReference type="GO" id="GO:0050976">
    <property type="term" value="P:detection of mechanical stimulus involved in sensory perception of touch"/>
    <property type="evidence" value="ECO:0000315"/>
    <property type="project" value="UniProtKB"/>
</dbReference>
<dbReference type="GO" id="GO:0042147">
    <property type="term" value="P:retrograde transport, endosome to Golgi"/>
    <property type="evidence" value="ECO:0000316"/>
    <property type="project" value="UniProtKB"/>
</dbReference>
<dbReference type="InterPro" id="IPR053937">
    <property type="entry name" value="GOST_TM"/>
</dbReference>
<dbReference type="InterPro" id="IPR009637">
    <property type="entry name" value="GPR107/GPR108-like"/>
</dbReference>
<dbReference type="InterPro" id="IPR054101">
    <property type="entry name" value="TMEM87A/B_GOLD"/>
</dbReference>
<dbReference type="PANTHER" id="PTHR21229">
    <property type="entry name" value="LUNG SEVEN TRANSMEMBRANE RECEPTOR"/>
    <property type="match status" value="1"/>
</dbReference>
<dbReference type="PANTHER" id="PTHR21229:SF19">
    <property type="entry name" value="TRANSMEMBRANE PROTEIN 87A"/>
    <property type="match status" value="1"/>
</dbReference>
<dbReference type="Pfam" id="PF06814">
    <property type="entry name" value="GOST_TM"/>
    <property type="match status" value="1"/>
</dbReference>
<dbReference type="Pfam" id="PF21901">
    <property type="entry name" value="TMEM87A-B_GOLD"/>
    <property type="match status" value="1"/>
</dbReference>
<evidence type="ECO:0000255" key="1"/>
<evidence type="ECO:0000256" key="2">
    <source>
        <dbReference type="SAM" id="MobiDB-lite"/>
    </source>
</evidence>
<evidence type="ECO:0000269" key="3">
    <source>
    </source>
</evidence>
<evidence type="ECO:0000269" key="4">
    <source>
    </source>
</evidence>
<evidence type="ECO:0000269" key="5">
    <source>
    </source>
</evidence>
<evidence type="ECO:0000269" key="6">
    <source>
    </source>
</evidence>
<evidence type="ECO:0000269" key="7">
    <source>
    </source>
</evidence>
<evidence type="ECO:0000303" key="8">
    <source>
    </source>
</evidence>
<evidence type="ECO:0000303" key="9">
    <source>
    </source>
</evidence>
<evidence type="ECO:0000305" key="10"/>
<evidence type="ECO:0000312" key="11">
    <source>
        <dbReference type="EMBL" id="BAC11598.1"/>
    </source>
</evidence>
<evidence type="ECO:0000312" key="12">
    <source>
        <dbReference type="HGNC" id="HGNC:24522"/>
    </source>
</evidence>
<evidence type="ECO:0007744" key="13">
    <source>
        <dbReference type="PDB" id="8CTJ"/>
    </source>
</evidence>
<evidence type="ECO:0007744" key="14">
    <source>
    </source>
</evidence>
<evidence type="ECO:0007744" key="15">
    <source>
    </source>
</evidence>
<evidence type="ECO:0007744" key="16">
    <source>
    </source>
</evidence>
<evidence type="ECO:0007744" key="17">
    <source>
    </source>
</evidence>
<evidence type="ECO:0007744" key="18">
    <source>
    </source>
</evidence>
<evidence type="ECO:0007744" key="19">
    <source>
    </source>
</evidence>
<evidence type="ECO:0007829" key="20">
    <source>
        <dbReference type="PDB" id="8HSI"/>
    </source>
</evidence>
<evidence type="ECO:0007829" key="21">
    <source>
        <dbReference type="PDB" id="8KB4"/>
    </source>
</evidence>
<gene>
    <name evidence="12" type="primary">TMEM87A</name>
    <name evidence="11" type="ORF">PSEC0094</name>
</gene>
<proteinExistence type="evidence at protein level"/>
<reference key="1">
    <citation type="submission" date="1999-03" db="EMBL/GenBank/DDBJ databases">
        <authorList>
            <person name="Luo W.Q."/>
            <person name="Chen J.H."/>
            <person name="Huang X.W."/>
            <person name="Zhou Y."/>
            <person name="Zhou H.J."/>
            <person name="Hu S.N."/>
            <person name="Yuan J.G."/>
        </authorList>
    </citation>
    <scope>NUCLEOTIDE SEQUENCE [LARGE SCALE MRNA] (ISOFORM 1)</scope>
</reference>
<reference key="2">
    <citation type="journal article" date="2005" name="DNA Res.">
        <title>Signal sequence and keyword trap in silico for selection of full-length human cDNAs encoding secretion or membrane proteins from oligo-capped cDNA libraries.</title>
        <authorList>
            <person name="Otsuki T."/>
            <person name="Ota T."/>
            <person name="Nishikawa T."/>
            <person name="Hayashi K."/>
            <person name="Suzuki Y."/>
            <person name="Yamamoto J."/>
            <person name="Wakamatsu A."/>
            <person name="Kimura K."/>
            <person name="Sakamoto K."/>
            <person name="Hatano N."/>
            <person name="Kawai Y."/>
            <person name="Ishii S."/>
            <person name="Saito K."/>
            <person name="Kojima S."/>
            <person name="Sugiyama T."/>
            <person name="Ono T."/>
            <person name="Okano K."/>
            <person name="Yoshikawa Y."/>
            <person name="Aotsuka S."/>
            <person name="Sasaki N."/>
            <person name="Hattori A."/>
            <person name="Okumura K."/>
            <person name="Nagai K."/>
            <person name="Sugano S."/>
            <person name="Isogai T."/>
        </authorList>
    </citation>
    <scope>NUCLEOTIDE SEQUENCE [LARGE SCALE MRNA] (ISOFORM 1)</scope>
    <source>
        <tissue>Teratocarcinoma</tissue>
    </source>
</reference>
<reference key="3">
    <citation type="journal article" date="2004" name="Genome Res.">
        <title>The status, quality, and expansion of the NIH full-length cDNA project: the Mammalian Gene Collection (MGC).</title>
        <authorList>
            <consortium name="The MGC Project Team"/>
        </authorList>
    </citation>
    <scope>NUCLEOTIDE SEQUENCE [LARGE SCALE MRNA] (ISOFORMS 2 AND 3)</scope>
    <source>
        <tissue>Placenta</tissue>
        <tissue>Urinary bladder</tissue>
    </source>
</reference>
<reference key="4">
    <citation type="journal article" date="2007" name="BMC Genomics">
        <title>The full-ORF clone resource of the German cDNA consortium.</title>
        <authorList>
            <person name="Bechtel S."/>
            <person name="Rosenfelder H."/>
            <person name="Duda A."/>
            <person name="Schmidt C.P."/>
            <person name="Ernst U."/>
            <person name="Wellenreuther R."/>
            <person name="Mehrle A."/>
            <person name="Schuster C."/>
            <person name="Bahr A."/>
            <person name="Bloecker H."/>
            <person name="Heubner D."/>
            <person name="Hoerlein A."/>
            <person name="Michel G."/>
            <person name="Wedler H."/>
            <person name="Koehrer K."/>
            <person name="Ottenwaelder B."/>
            <person name="Poustka A."/>
            <person name="Wiemann S."/>
            <person name="Schupp I."/>
        </authorList>
    </citation>
    <scope>NUCLEOTIDE SEQUENCE [LARGE SCALE MRNA] OF 424-555</scope>
    <source>
        <tissue>Brain</tissue>
    </source>
</reference>
<reference key="5">
    <citation type="journal article" date="2008" name="Mol. Cell">
        <title>Kinase-selective enrichment enables quantitative phosphoproteomics of the kinome across the cell cycle.</title>
        <authorList>
            <person name="Daub H."/>
            <person name="Olsen J.V."/>
            <person name="Bairlein M."/>
            <person name="Gnad F."/>
            <person name="Oppermann F.S."/>
            <person name="Korner R."/>
            <person name="Greff Z."/>
            <person name="Keri G."/>
            <person name="Stemmann O."/>
            <person name="Mann M."/>
        </authorList>
    </citation>
    <scope>PHOSPHORYLATION [LARGE SCALE ANALYSIS] AT SER-540</scope>
    <scope>IDENTIFICATION BY MASS SPECTROMETRY [LARGE SCALE ANALYSIS]</scope>
    <source>
        <tissue>Cervix carcinoma</tissue>
    </source>
</reference>
<reference key="6">
    <citation type="journal article" date="2008" name="Proc. Natl. Acad. Sci. U.S.A.">
        <title>A quantitative atlas of mitotic phosphorylation.</title>
        <authorList>
            <person name="Dephoure N."/>
            <person name="Zhou C."/>
            <person name="Villen J."/>
            <person name="Beausoleil S.A."/>
            <person name="Bakalarski C.E."/>
            <person name="Elledge S.J."/>
            <person name="Gygi S.P."/>
        </authorList>
    </citation>
    <scope>PHOSPHORYLATION [LARGE SCALE ANALYSIS] AT SER-540</scope>
    <scope>IDENTIFICATION BY MASS SPECTROMETRY [LARGE SCALE ANALYSIS]</scope>
    <source>
        <tissue>Cervix carcinoma</tissue>
    </source>
</reference>
<reference key="7">
    <citation type="journal article" date="2009" name="Anal. Chem.">
        <title>Lys-N and trypsin cover complementary parts of the phosphoproteome in a refined SCX-based approach.</title>
        <authorList>
            <person name="Gauci S."/>
            <person name="Helbig A.O."/>
            <person name="Slijper M."/>
            <person name="Krijgsveld J."/>
            <person name="Heck A.J."/>
            <person name="Mohammed S."/>
        </authorList>
    </citation>
    <scope>IDENTIFICATION BY MASS SPECTROMETRY [LARGE SCALE ANALYSIS]</scope>
</reference>
<reference key="8">
    <citation type="journal article" date="2009" name="Nat. Biotechnol.">
        <title>Mass-spectrometric identification and relative quantification of N-linked cell surface glycoproteins.</title>
        <authorList>
            <person name="Wollscheid B."/>
            <person name="Bausch-Fluck D."/>
            <person name="Henderson C."/>
            <person name="O'Brien R."/>
            <person name="Bibel M."/>
            <person name="Schiess R."/>
            <person name="Aebersold R."/>
            <person name="Watts J.D."/>
        </authorList>
    </citation>
    <scope>GLYCOSYLATION [LARGE SCALE ANALYSIS] AT ASN-157 AND ASN-160</scope>
    <source>
        <tissue>Leukemic T-cell</tissue>
    </source>
</reference>
<reference key="9">
    <citation type="journal article" date="2009" name="Sci. Signal.">
        <title>Quantitative phosphoproteomic analysis of T cell receptor signaling reveals system-wide modulation of protein-protein interactions.</title>
        <authorList>
            <person name="Mayya V."/>
            <person name="Lundgren D.H."/>
            <person name="Hwang S.-I."/>
            <person name="Rezaul K."/>
            <person name="Wu L."/>
            <person name="Eng J.K."/>
            <person name="Rodionov V."/>
            <person name="Han D.K."/>
        </authorList>
    </citation>
    <scope>PHOSPHORYLATION [LARGE SCALE ANALYSIS] AT SER-540</scope>
    <scope>IDENTIFICATION BY MASS SPECTROMETRY [LARGE SCALE ANALYSIS]</scope>
    <source>
        <tissue>Leukemic T-cell</tissue>
    </source>
</reference>
<reference key="10">
    <citation type="journal article" date="2010" name="Sci. Signal.">
        <title>Quantitative phosphoproteomics reveals widespread full phosphorylation site occupancy during mitosis.</title>
        <authorList>
            <person name="Olsen J.V."/>
            <person name="Vermeulen M."/>
            <person name="Santamaria A."/>
            <person name="Kumar C."/>
            <person name="Miller M.L."/>
            <person name="Jensen L.J."/>
            <person name="Gnad F."/>
            <person name="Cox J."/>
            <person name="Jensen T.S."/>
            <person name="Nigg E.A."/>
            <person name="Brunak S."/>
            <person name="Mann M."/>
        </authorList>
    </citation>
    <scope>PHOSPHORYLATION [LARGE SCALE ANALYSIS] AT SER-540</scope>
    <scope>IDENTIFICATION BY MASS SPECTROMETRY [LARGE SCALE ANALYSIS]</scope>
    <source>
        <tissue>Cervix carcinoma</tissue>
    </source>
</reference>
<reference key="11">
    <citation type="journal article" date="2011" name="Sci. Signal.">
        <title>System-wide temporal characterization of the proteome and phosphoproteome of human embryonic stem cell differentiation.</title>
        <authorList>
            <person name="Rigbolt K.T."/>
            <person name="Prokhorova T.A."/>
            <person name="Akimov V."/>
            <person name="Henningsen J."/>
            <person name="Johansen P.T."/>
            <person name="Kratchmarova I."/>
            <person name="Kassem M."/>
            <person name="Mann M."/>
            <person name="Olsen J.V."/>
            <person name="Blagoev B."/>
        </authorList>
    </citation>
    <scope>PHOSPHORYLATION [LARGE SCALE ANALYSIS] AT SER-540</scope>
    <scope>IDENTIFICATION BY MASS SPECTROMETRY [LARGE SCALE ANALYSIS]</scope>
</reference>
<reference key="12">
    <citation type="journal article" date="2014" name="J. Proteomics">
        <title>An enzyme assisted RP-RPLC approach for in-depth analysis of human liver phosphoproteome.</title>
        <authorList>
            <person name="Bian Y."/>
            <person name="Song C."/>
            <person name="Cheng K."/>
            <person name="Dong M."/>
            <person name="Wang F."/>
            <person name="Huang J."/>
            <person name="Sun D."/>
            <person name="Wang L."/>
            <person name="Ye M."/>
            <person name="Zou H."/>
        </authorList>
    </citation>
    <scope>PHOSPHORYLATION [LARGE SCALE ANALYSIS] AT SER-540</scope>
    <scope>IDENTIFICATION BY MASS SPECTROMETRY [LARGE SCALE ANALYSIS]</scope>
    <source>
        <tissue>Liver</tissue>
    </source>
</reference>
<reference key="13">
    <citation type="journal article" date="2015" name="Mol. Biol. Cell">
        <title>Post-Golgi anterograde transport requires GARP-dependent endosome-to-TGN retrograde transport.</title>
        <authorList>
            <person name="Hirata T."/>
            <person name="Fujita M."/>
            <person name="Nakamura S."/>
            <person name="Gotoh K."/>
            <person name="Motooka D."/>
            <person name="Murakami Y."/>
            <person name="Maeda Y."/>
            <person name="Kinoshita T."/>
        </authorList>
    </citation>
    <scope>FUNCTION</scope>
    <scope>SUBCELLULAR LOCATION</scope>
</reference>
<reference key="14">
    <citation type="journal article" date="2015" name="Proteomics">
        <title>N-terminome analysis of the human mitochondrial proteome.</title>
        <authorList>
            <person name="Vaca Jacome A.S."/>
            <person name="Rabilloud T."/>
            <person name="Schaeffer-Reiss C."/>
            <person name="Rompais M."/>
            <person name="Ayoub D."/>
            <person name="Lane L."/>
            <person name="Bairoch A."/>
            <person name="Van Dorsselaer A."/>
            <person name="Carapito C."/>
        </authorList>
    </citation>
    <scope>IDENTIFICATION BY MASS SPECTROMETRY [LARGE SCALE ANALYSIS]</scope>
</reference>
<reference key="15">
    <citation type="journal article" date="2020" name="Elife">
        <title>TMEM87a/Elkin1, a component of a novel mechanoelectrical transduction pathway, modulates melanoma adhesion and migration.</title>
        <authorList>
            <person name="Patkunarajah A."/>
            <person name="Stear J.H."/>
            <person name="Moroni M."/>
            <person name="Schroeter L."/>
            <person name="Blaszkiewicz J."/>
            <person name="Tearle J.L."/>
            <person name="Cox C.D."/>
            <person name="Fuerst C."/>
            <person name="Sanchez-Carranza O."/>
            <person name="Ocana Fernandez M.D.A."/>
            <person name="Fleischer R."/>
            <person name="Eravci M."/>
            <person name="Weise C."/>
            <person name="Martinac B."/>
            <person name="Biro M."/>
            <person name="Lewin G.R."/>
            <person name="Poole K."/>
        </authorList>
    </citation>
    <scope>FUNCTION</scope>
    <scope>SUBCELLULAR LOCATION (ISOFORMS 1 AND 3)</scope>
    <scope>MUTAGENESIS OF LEU-271 AND GLY-292</scope>
    <scope>MISCELLANEOUS</scope>
</reference>
<reference key="16">
    <citation type="journal article" date="2024" name="Science">
        <title>Touch sensation requires the mechanically gated ion channel ELKIN1.</title>
        <authorList>
            <person name="Chakrabarti S."/>
            <person name="Klich J.D."/>
            <person name="Khallaf M.A."/>
            <person name="Hulme A.J."/>
            <person name="Sanchez-Carranza O."/>
            <person name="Baran Z.M."/>
            <person name="Rossi A."/>
            <person name="Huang A.T."/>
            <person name="Pohl T."/>
            <person name="Fleischer R."/>
            <person name="Fuerst C."/>
            <person name="Hammes A."/>
            <person name="Begay V."/>
            <person name="Hoernberg H."/>
            <person name="Finol-Urdaneta R.K."/>
            <person name="Poole K."/>
            <person name="Dottori M."/>
            <person name="Lewin G.R."/>
        </authorList>
    </citation>
    <scope>FUNCTION</scope>
    <scope>INTERACTION WITH STOML3</scope>
</reference>
<reference evidence="13" key="17">
    <citation type="journal article" date="2022" name="Elife">
        <title>Structure of the GOLD-domain seven-transmembrane helix protein family member TMEM87A.</title>
        <authorList>
            <person name="Hoel C.M."/>
            <person name="Zhang L."/>
            <person name="Brohawn S.G."/>
        </authorList>
    </citation>
    <scope>STRUCTURE BY ELECTRON MICROSCOPY (4.74 ANGSTROMS)</scope>
    <scope>FUNCTION</scope>
    <scope>DISULFIDE BONDS</scope>
</reference>
<protein>
    <recommendedName>
        <fullName evidence="10">Transmembrane protein 87A</fullName>
    </recommendedName>
    <alternativeName>
        <fullName evidence="9">Elkin1</fullName>
    </alternativeName>
</protein>
<keyword id="KW-0002">3D-structure</keyword>
<keyword id="KW-0025">Alternative splicing</keyword>
<keyword id="KW-1003">Cell membrane</keyword>
<keyword id="KW-0966">Cell projection</keyword>
<keyword id="KW-1015">Disulfide bond</keyword>
<keyword id="KW-0325">Glycoprotein</keyword>
<keyword id="KW-0333">Golgi apparatus</keyword>
<keyword id="KW-0472">Membrane</keyword>
<keyword id="KW-0597">Phosphoprotein</keyword>
<keyword id="KW-1267">Proteomics identification</keyword>
<keyword id="KW-1185">Reference proteome</keyword>
<keyword id="KW-0732">Signal</keyword>
<keyword id="KW-0812">Transmembrane</keyword>
<keyword id="KW-1133">Transmembrane helix</keyword>
<sequence length="555" mass="63430">MAAAAWLQVLPVILLLLGAHPSPLSFFSAGPATVAAADRSKWHIPIPSGKNYFSFGKILFRNTTIFLKFDGEPCDLSLNITWYLKSADCYNEIYNFKAEEVELYLEKLKEKRGLSGKYQTSSKLFQNCSELFKTQTFSGDFMHRLPLLGEKQEAKENGTNLTFIGDKTAMHEPLQTWQDAPYIFIVHIGISSSKESSKENSLSNLFTMTVEVKGPYEYLTLEDYPLMIFFMVMCIVYVLFGVLWLAWSACYWRDLLRIQFWIGAVIFLGMLEKAVFYAEFQNIRYKGESVQGALILAELLSAVKRSLARTLVIIVSLGYGIVKPRLGVTLHKVVVAGALYLLFSGMEGVLRVTGAQTDLASLAFIPLAFLDTALCWWIFISLTQTMKLLKLRRNIVKLSLYRHFTNTLILAVAASIVFIIWTTMKFRIVTCQSDWRELWVDDAIWRLLFSMILFVIMVLWRPSANNQRFAFSPLSEEEEEDEQKEPMLKESFEGMKMRSTKQEPNGNSKVNKAQEDDLKWVEENVPSSVTDVALPALLDSDEERMITHFERSKME</sequence>
<organism>
    <name type="scientific">Homo sapiens</name>
    <name type="common">Human</name>
    <dbReference type="NCBI Taxonomy" id="9606"/>
    <lineage>
        <taxon>Eukaryota</taxon>
        <taxon>Metazoa</taxon>
        <taxon>Chordata</taxon>
        <taxon>Craniata</taxon>
        <taxon>Vertebrata</taxon>
        <taxon>Euteleostomi</taxon>
        <taxon>Mammalia</taxon>
        <taxon>Eutheria</taxon>
        <taxon>Euarchontoglires</taxon>
        <taxon>Primates</taxon>
        <taxon>Haplorrhini</taxon>
        <taxon>Catarrhini</taxon>
        <taxon>Hominidae</taxon>
        <taxon>Homo</taxon>
    </lineage>
</organism>
<comment type="function">
    <text evidence="4 5 6 7">Potential monoatomic ion channel gated by mechanical force, implicated in normal touch sensitivity through the generation of mechanically activated currents (PubMed:32228863, PubMed:38422143). However, a direct channel activity is debated and an alternative could be that it functions as a chaperone for an unidentified mechanosensitive ion channel (PubMed:32228863, PubMed:36373655). Could also be involved in cell mechanosensitivity regulating cell adhesion and migration (PubMed:32228863). May also be involved in retrograde transport from endosomes to the trans-Golgi network (TGN) (PubMed:26157166).</text>
</comment>
<comment type="subunit">
    <text evidence="7">May interact with STOML3; STOML3 potentiates the mechanosensitive ion channel activity associated with TMEM87A.</text>
</comment>
<comment type="subcellular location">
    <molecule>Isoform 1</molecule>
    <subcellularLocation>
        <location evidence="5">Cell membrane</location>
        <topology evidence="1">Multi-pass membrane protein</topology>
    </subcellularLocation>
    <subcellularLocation>
        <location evidence="4 5">Golgi apparatus membrane</location>
        <topology evidence="1">Multi-pass membrane protein</topology>
    </subcellularLocation>
</comment>
<comment type="subcellular location">
    <molecule>Isoform 3</molecule>
    <subcellularLocation>
        <location evidence="5">Cell membrane</location>
        <topology evidence="1">Multi-pass membrane protein</topology>
    </subcellularLocation>
    <subcellularLocation>
        <location evidence="5">Cell projection</location>
        <location evidence="5">Ruffle</location>
    </subcellularLocation>
</comment>
<comment type="alternative products">
    <event type="alternative splicing"/>
    <isoform>
        <id>Q8NBN3-1</id>
        <name>1</name>
        <sequence type="displayed"/>
    </isoform>
    <isoform>
        <id>Q8NBN3-2</id>
        <name>2</name>
        <sequence type="described" ref="VSP_022208 VSP_022209"/>
    </isoform>
    <isoform>
        <id>Q8NBN3-3</id>
        <name>3</name>
        <sequence type="described" ref="VSP_022207"/>
    </isoform>
</comment>
<comment type="miscellaneous">
    <text evidence="9">Named Elkin, from the Greek word Elko, meaning 'to pull'.</text>
</comment>
<comment type="similarity">
    <text evidence="10">Belongs to the LU7TM family. TMEM87 subfamily.</text>
</comment>
<comment type="sequence caution" evidence="10">
    <conflict type="erroneous initiation">
        <sequence resource="EMBL-CDS" id="BAC11598"/>
    </conflict>
    <text>Extended N-terminus.</text>
</comment>